<keyword id="KW-0328">Glycosyltransferase</keyword>
<keyword id="KW-0479">Metal-binding</keyword>
<keyword id="KW-0671">Queuosine biosynthesis</keyword>
<keyword id="KW-0808">Transferase</keyword>
<keyword id="KW-0819">tRNA processing</keyword>
<keyword id="KW-0862">Zinc</keyword>
<protein>
    <recommendedName>
        <fullName evidence="1">Queuine tRNA-ribosyltransferase</fullName>
        <ecNumber evidence="1">2.4.2.29</ecNumber>
    </recommendedName>
    <alternativeName>
        <fullName evidence="1">Guanine insertion enzyme</fullName>
    </alternativeName>
    <alternativeName>
        <fullName evidence="1">tRNA-guanine transglycosylase</fullName>
    </alternativeName>
</protein>
<comment type="function">
    <text evidence="1">Catalyzes the base-exchange of a guanine (G) residue with the queuine precursor 7-aminomethyl-7-deazaguanine (PreQ1) at position 34 (anticodon wobble position) in tRNAs with GU(N) anticodons (tRNA-Asp, -Asn, -His and -Tyr). Catalysis occurs through a double-displacement mechanism. The nucleophile active site attacks the C1' of nucleotide 34 to detach the guanine base from the RNA, forming a covalent enzyme-RNA intermediate. The proton acceptor active site deprotonates the incoming PreQ1, allowing a nucleophilic attack on the C1' of the ribose to form the product. After dissociation, two additional enzymatic reactions on the tRNA convert PreQ1 to queuine (Q), resulting in the hypermodified nucleoside queuosine (7-(((4,5-cis-dihydroxy-2-cyclopenten-1-yl)amino)methyl)-7-deazaguanosine).</text>
</comment>
<comment type="catalytic activity">
    <reaction evidence="1">
        <text>7-aminomethyl-7-carbaguanine + guanosine(34) in tRNA = 7-aminomethyl-7-carbaguanosine(34) in tRNA + guanine</text>
        <dbReference type="Rhea" id="RHEA:24104"/>
        <dbReference type="Rhea" id="RHEA-COMP:10341"/>
        <dbReference type="Rhea" id="RHEA-COMP:10342"/>
        <dbReference type="ChEBI" id="CHEBI:16235"/>
        <dbReference type="ChEBI" id="CHEBI:58703"/>
        <dbReference type="ChEBI" id="CHEBI:74269"/>
        <dbReference type="ChEBI" id="CHEBI:82833"/>
        <dbReference type="EC" id="2.4.2.29"/>
    </reaction>
</comment>
<comment type="cofactor">
    <cofactor evidence="1">
        <name>Zn(2+)</name>
        <dbReference type="ChEBI" id="CHEBI:29105"/>
    </cofactor>
    <text evidence="1">Binds 1 zinc ion per subunit.</text>
</comment>
<comment type="pathway">
    <text evidence="1">tRNA modification; tRNA-queuosine biosynthesis.</text>
</comment>
<comment type="subunit">
    <text evidence="1">Homodimer. Within each dimer, one monomer is responsible for RNA recognition and catalysis, while the other monomer binds to the replacement base PreQ1.</text>
</comment>
<comment type="similarity">
    <text evidence="1">Belongs to the queuine tRNA-ribosyltransferase family.</text>
</comment>
<reference key="1">
    <citation type="journal article" date="2010" name="PLoS Genet.">
        <title>Genome sequence of the plant growth promoting endophytic bacterium Enterobacter sp. 638.</title>
        <authorList>
            <person name="Taghavi S."/>
            <person name="van der Lelie D."/>
            <person name="Hoffman A."/>
            <person name="Zhang Y.B."/>
            <person name="Walla M.D."/>
            <person name="Vangronsveld J."/>
            <person name="Newman L."/>
            <person name="Monchy S."/>
        </authorList>
    </citation>
    <scope>NUCLEOTIDE SEQUENCE [LARGE SCALE GENOMIC DNA]</scope>
    <source>
        <strain>638</strain>
    </source>
</reference>
<organism>
    <name type="scientific">Enterobacter sp. (strain 638)</name>
    <dbReference type="NCBI Taxonomy" id="399742"/>
    <lineage>
        <taxon>Bacteria</taxon>
        <taxon>Pseudomonadati</taxon>
        <taxon>Pseudomonadota</taxon>
        <taxon>Gammaproteobacteria</taxon>
        <taxon>Enterobacterales</taxon>
        <taxon>Enterobacteriaceae</taxon>
        <taxon>Enterobacter</taxon>
    </lineage>
</organism>
<gene>
    <name evidence="1" type="primary">tgt</name>
    <name type="ordered locus">Ent638_0875</name>
</gene>
<accession>A4W779</accession>
<name>TGT_ENT38</name>
<sequence>MKFELDTTDGRARRGRLVFDRGVVETPAFMPVGTYGTVKGMTPEEVEATGAQIILGNTFHLWLRPGQEVMKLHGDLHDFMQWKGPILTDSGGFQVFSLGDIRKITEKGVHFRNPINGDPIFLDPEKSMEIQYDLGSDIVMIFDECTPYPADWDYAKRSMEMSLRWAQRSRDRFDSLENKNALFGIIQGSVYEDLRDISVKGLVEIGFDGYAVGGLAVGEPKEDMHRILEHVCPQIPEDKPRYLMGVGKPEDLVEGVRRGIDMFDCVMPTRNARNGHLFVTDGVVKIRNAKHKSDTSTLDAECDCYTCRHYSRAYLYHLDRCNEILGARLNTIHNLRYYQRLMAGLRKAIEEGKLESFVTDFYQRQGRDVPPLNVD</sequence>
<dbReference type="EC" id="2.4.2.29" evidence="1"/>
<dbReference type="EMBL" id="CP000653">
    <property type="protein sequence ID" value="ABP59559.1"/>
    <property type="molecule type" value="Genomic_DNA"/>
</dbReference>
<dbReference type="RefSeq" id="WP_012016280.1">
    <property type="nucleotide sequence ID" value="NC_009436.1"/>
</dbReference>
<dbReference type="SMR" id="A4W779"/>
<dbReference type="STRING" id="399742.Ent638_0875"/>
<dbReference type="GeneID" id="93308002"/>
<dbReference type="KEGG" id="ent:Ent638_0875"/>
<dbReference type="eggNOG" id="COG0343">
    <property type="taxonomic scope" value="Bacteria"/>
</dbReference>
<dbReference type="HOGENOM" id="CLU_022060_0_1_6"/>
<dbReference type="OrthoDB" id="9805417at2"/>
<dbReference type="UniPathway" id="UPA00392"/>
<dbReference type="Proteomes" id="UP000000230">
    <property type="component" value="Chromosome"/>
</dbReference>
<dbReference type="GO" id="GO:0005829">
    <property type="term" value="C:cytosol"/>
    <property type="evidence" value="ECO:0007669"/>
    <property type="project" value="TreeGrafter"/>
</dbReference>
<dbReference type="GO" id="GO:0046872">
    <property type="term" value="F:metal ion binding"/>
    <property type="evidence" value="ECO:0007669"/>
    <property type="project" value="UniProtKB-KW"/>
</dbReference>
<dbReference type="GO" id="GO:0008479">
    <property type="term" value="F:tRNA-guanosine(34) queuine transglycosylase activity"/>
    <property type="evidence" value="ECO:0007669"/>
    <property type="project" value="UniProtKB-UniRule"/>
</dbReference>
<dbReference type="GO" id="GO:0008616">
    <property type="term" value="P:queuosine biosynthetic process"/>
    <property type="evidence" value="ECO:0007669"/>
    <property type="project" value="UniProtKB-UniRule"/>
</dbReference>
<dbReference type="GO" id="GO:0002099">
    <property type="term" value="P:tRNA wobble guanine modification"/>
    <property type="evidence" value="ECO:0007669"/>
    <property type="project" value="TreeGrafter"/>
</dbReference>
<dbReference type="GO" id="GO:0101030">
    <property type="term" value="P:tRNA-guanine transglycosylation"/>
    <property type="evidence" value="ECO:0007669"/>
    <property type="project" value="InterPro"/>
</dbReference>
<dbReference type="FunFam" id="3.20.20.105:FF:000001">
    <property type="entry name" value="Queuine tRNA-ribosyltransferase"/>
    <property type="match status" value="1"/>
</dbReference>
<dbReference type="Gene3D" id="3.20.20.105">
    <property type="entry name" value="Queuine tRNA-ribosyltransferase-like"/>
    <property type="match status" value="1"/>
</dbReference>
<dbReference type="HAMAP" id="MF_00168">
    <property type="entry name" value="Q_tRNA_Tgt"/>
    <property type="match status" value="1"/>
</dbReference>
<dbReference type="InterPro" id="IPR050076">
    <property type="entry name" value="ArchSynthase1/Queuine_TRR"/>
</dbReference>
<dbReference type="InterPro" id="IPR004803">
    <property type="entry name" value="TGT"/>
</dbReference>
<dbReference type="InterPro" id="IPR036511">
    <property type="entry name" value="TGT-like_sf"/>
</dbReference>
<dbReference type="InterPro" id="IPR002616">
    <property type="entry name" value="tRNA_ribo_trans-like"/>
</dbReference>
<dbReference type="NCBIfam" id="TIGR00430">
    <property type="entry name" value="Q_tRNA_tgt"/>
    <property type="match status" value="1"/>
</dbReference>
<dbReference type="NCBIfam" id="TIGR00449">
    <property type="entry name" value="tgt_general"/>
    <property type="match status" value="1"/>
</dbReference>
<dbReference type="PANTHER" id="PTHR46499">
    <property type="entry name" value="QUEUINE TRNA-RIBOSYLTRANSFERASE"/>
    <property type="match status" value="1"/>
</dbReference>
<dbReference type="PANTHER" id="PTHR46499:SF1">
    <property type="entry name" value="QUEUINE TRNA-RIBOSYLTRANSFERASE"/>
    <property type="match status" value="1"/>
</dbReference>
<dbReference type="Pfam" id="PF01702">
    <property type="entry name" value="TGT"/>
    <property type="match status" value="1"/>
</dbReference>
<dbReference type="SUPFAM" id="SSF51713">
    <property type="entry name" value="tRNA-guanine transglycosylase"/>
    <property type="match status" value="1"/>
</dbReference>
<proteinExistence type="inferred from homology"/>
<feature type="chain" id="PRO_1000058282" description="Queuine tRNA-ribosyltransferase">
    <location>
        <begin position="1"/>
        <end position="375"/>
    </location>
</feature>
<feature type="region of interest" description="RNA binding" evidence="1">
    <location>
        <begin position="245"/>
        <end position="251"/>
    </location>
</feature>
<feature type="region of interest" description="RNA binding; important for wobble base 34 recognition" evidence="1">
    <location>
        <begin position="269"/>
        <end position="273"/>
    </location>
</feature>
<feature type="active site" description="Proton acceptor" evidence="1">
    <location>
        <position position="89"/>
    </location>
</feature>
<feature type="active site" description="Nucleophile" evidence="1">
    <location>
        <position position="264"/>
    </location>
</feature>
<feature type="binding site" evidence="1">
    <location>
        <begin position="89"/>
        <end position="93"/>
    </location>
    <ligand>
        <name>substrate</name>
    </ligand>
</feature>
<feature type="binding site" evidence="1">
    <location>
        <position position="143"/>
    </location>
    <ligand>
        <name>substrate</name>
    </ligand>
</feature>
<feature type="binding site" evidence="1">
    <location>
        <position position="187"/>
    </location>
    <ligand>
        <name>substrate</name>
    </ligand>
</feature>
<feature type="binding site" evidence="1">
    <location>
        <position position="214"/>
    </location>
    <ligand>
        <name>substrate</name>
    </ligand>
</feature>
<feature type="binding site" evidence="1">
    <location>
        <position position="302"/>
    </location>
    <ligand>
        <name>Zn(2+)</name>
        <dbReference type="ChEBI" id="CHEBI:29105"/>
    </ligand>
</feature>
<feature type="binding site" evidence="1">
    <location>
        <position position="304"/>
    </location>
    <ligand>
        <name>Zn(2+)</name>
        <dbReference type="ChEBI" id="CHEBI:29105"/>
    </ligand>
</feature>
<feature type="binding site" evidence="1">
    <location>
        <position position="307"/>
    </location>
    <ligand>
        <name>Zn(2+)</name>
        <dbReference type="ChEBI" id="CHEBI:29105"/>
    </ligand>
</feature>
<feature type="binding site" evidence="1">
    <location>
        <position position="333"/>
    </location>
    <ligand>
        <name>Zn(2+)</name>
        <dbReference type="ChEBI" id="CHEBI:29105"/>
    </ligand>
</feature>
<evidence type="ECO:0000255" key="1">
    <source>
        <dbReference type="HAMAP-Rule" id="MF_00168"/>
    </source>
</evidence>